<organism>
    <name type="scientific">Schizosaccharomyces pombe (strain 972 / ATCC 24843)</name>
    <name type="common">Fission yeast</name>
    <dbReference type="NCBI Taxonomy" id="284812"/>
    <lineage>
        <taxon>Eukaryota</taxon>
        <taxon>Fungi</taxon>
        <taxon>Dikarya</taxon>
        <taxon>Ascomycota</taxon>
        <taxon>Taphrinomycotina</taxon>
        <taxon>Schizosaccharomycetes</taxon>
        <taxon>Schizosaccharomycetales</taxon>
        <taxon>Schizosaccharomycetaceae</taxon>
        <taxon>Schizosaccharomyces</taxon>
    </lineage>
</organism>
<name>RTC6_SCHPO</name>
<keyword id="KW-0496">Mitochondrion</keyword>
<keyword id="KW-1185">Reference proteome</keyword>
<keyword id="KW-0687">Ribonucleoprotein</keyword>
<keyword id="KW-0689">Ribosomal protein</keyword>
<keyword id="KW-0809">Transit peptide</keyword>
<dbReference type="EMBL" id="CU329671">
    <property type="protein sequence ID" value="CAB36868.2"/>
    <property type="molecule type" value="Genomic_DNA"/>
</dbReference>
<dbReference type="PIR" id="T40695">
    <property type="entry name" value="T40695"/>
</dbReference>
<dbReference type="RefSeq" id="NP_595638.2">
    <property type="nucleotide sequence ID" value="NM_001021532.2"/>
</dbReference>
<dbReference type="SMR" id="O94690"/>
<dbReference type="BioGRID" id="277300">
    <property type="interactions" value="12"/>
</dbReference>
<dbReference type="ComplexPortal" id="CPX-10323">
    <property type="entry name" value="54S mitochondrial large ribosomal subunit"/>
</dbReference>
<dbReference type="FunCoup" id="O94690">
    <property type="interactions" value="200"/>
</dbReference>
<dbReference type="STRING" id="284812.O94690"/>
<dbReference type="PaxDb" id="4896-SPBC83.06c.1"/>
<dbReference type="EnsemblFungi" id="SPBC83.06c.1">
    <property type="protein sequence ID" value="SPBC83.06c.1:pep"/>
    <property type="gene ID" value="SPBC83.06c"/>
</dbReference>
<dbReference type="GeneID" id="2540781"/>
<dbReference type="KEGG" id="spo:2540781"/>
<dbReference type="PomBase" id="SPBC83.06c">
    <property type="gene designation" value="rtc6"/>
</dbReference>
<dbReference type="VEuPathDB" id="FungiDB:SPBC83.06c"/>
<dbReference type="eggNOG" id="KOG4122">
    <property type="taxonomic scope" value="Eukaryota"/>
</dbReference>
<dbReference type="HOGENOM" id="CLU_135723_1_2_1"/>
<dbReference type="InParanoid" id="O94690"/>
<dbReference type="PRO" id="PR:O94690"/>
<dbReference type="Proteomes" id="UP000002485">
    <property type="component" value="Chromosome II"/>
</dbReference>
<dbReference type="GO" id="GO:0005762">
    <property type="term" value="C:mitochondrial large ribosomal subunit"/>
    <property type="evidence" value="ECO:0000318"/>
    <property type="project" value="GO_Central"/>
</dbReference>
<dbReference type="GO" id="GO:0005739">
    <property type="term" value="C:mitochondrion"/>
    <property type="evidence" value="ECO:0007005"/>
    <property type="project" value="PomBase"/>
</dbReference>
<dbReference type="GO" id="GO:0003735">
    <property type="term" value="F:structural constituent of ribosome"/>
    <property type="evidence" value="ECO:0007669"/>
    <property type="project" value="InterPro"/>
</dbReference>
<dbReference type="GO" id="GO:0032543">
    <property type="term" value="P:mitochondrial translation"/>
    <property type="evidence" value="ECO:0000305"/>
    <property type="project" value="PomBase"/>
</dbReference>
<dbReference type="HAMAP" id="MF_00251">
    <property type="entry name" value="Ribosomal_bL36"/>
    <property type="match status" value="1"/>
</dbReference>
<dbReference type="InterPro" id="IPR052143">
    <property type="entry name" value="Mitoribosomal_bL36m"/>
</dbReference>
<dbReference type="InterPro" id="IPR000473">
    <property type="entry name" value="Ribosomal_bL36"/>
</dbReference>
<dbReference type="InterPro" id="IPR035977">
    <property type="entry name" value="Ribosomal_bL36_sp"/>
</dbReference>
<dbReference type="NCBIfam" id="TIGR01022">
    <property type="entry name" value="rpmJ_bact"/>
    <property type="match status" value="1"/>
</dbReference>
<dbReference type="PANTHER" id="PTHR46909">
    <property type="entry name" value="39S RIBOSOMAL PROTEIN L36, MITOCHONDRIAL"/>
    <property type="match status" value="1"/>
</dbReference>
<dbReference type="PANTHER" id="PTHR46909:SF1">
    <property type="entry name" value="LARGE RIBOSOMAL SUBUNIT PROTEIN BL36M"/>
    <property type="match status" value="1"/>
</dbReference>
<dbReference type="Pfam" id="PF00444">
    <property type="entry name" value="Ribosomal_L36"/>
    <property type="match status" value="1"/>
</dbReference>
<dbReference type="SUPFAM" id="SSF57840">
    <property type="entry name" value="Ribosomal protein L36"/>
    <property type="match status" value="1"/>
</dbReference>
<accession>O94690</accession>
<reference key="1">
    <citation type="journal article" date="2002" name="Nature">
        <title>The genome sequence of Schizosaccharomyces pombe.</title>
        <authorList>
            <person name="Wood V."/>
            <person name="Gwilliam R."/>
            <person name="Rajandream M.A."/>
            <person name="Lyne M.H."/>
            <person name="Lyne R."/>
            <person name="Stewart A."/>
            <person name="Sgouros J.G."/>
            <person name="Peat N."/>
            <person name="Hayles J."/>
            <person name="Baker S.G."/>
            <person name="Basham D."/>
            <person name="Bowman S."/>
            <person name="Brooks K."/>
            <person name="Brown D."/>
            <person name="Brown S."/>
            <person name="Chillingworth T."/>
            <person name="Churcher C.M."/>
            <person name="Collins M."/>
            <person name="Connor R."/>
            <person name="Cronin A."/>
            <person name="Davis P."/>
            <person name="Feltwell T."/>
            <person name="Fraser A."/>
            <person name="Gentles S."/>
            <person name="Goble A."/>
            <person name="Hamlin N."/>
            <person name="Harris D.E."/>
            <person name="Hidalgo J."/>
            <person name="Hodgson G."/>
            <person name="Holroyd S."/>
            <person name="Hornsby T."/>
            <person name="Howarth S."/>
            <person name="Huckle E.J."/>
            <person name="Hunt S."/>
            <person name="Jagels K."/>
            <person name="James K.D."/>
            <person name="Jones L."/>
            <person name="Jones M."/>
            <person name="Leather S."/>
            <person name="McDonald S."/>
            <person name="McLean J."/>
            <person name="Mooney P."/>
            <person name="Moule S."/>
            <person name="Mungall K.L."/>
            <person name="Murphy L.D."/>
            <person name="Niblett D."/>
            <person name="Odell C."/>
            <person name="Oliver K."/>
            <person name="O'Neil S."/>
            <person name="Pearson D."/>
            <person name="Quail M.A."/>
            <person name="Rabbinowitsch E."/>
            <person name="Rutherford K.M."/>
            <person name="Rutter S."/>
            <person name="Saunders D."/>
            <person name="Seeger K."/>
            <person name="Sharp S."/>
            <person name="Skelton J."/>
            <person name="Simmonds M.N."/>
            <person name="Squares R."/>
            <person name="Squares S."/>
            <person name="Stevens K."/>
            <person name="Taylor K."/>
            <person name="Taylor R.G."/>
            <person name="Tivey A."/>
            <person name="Walsh S.V."/>
            <person name="Warren T."/>
            <person name="Whitehead S."/>
            <person name="Woodward J.R."/>
            <person name="Volckaert G."/>
            <person name="Aert R."/>
            <person name="Robben J."/>
            <person name="Grymonprez B."/>
            <person name="Weltjens I."/>
            <person name="Vanstreels E."/>
            <person name="Rieger M."/>
            <person name="Schaefer M."/>
            <person name="Mueller-Auer S."/>
            <person name="Gabel C."/>
            <person name="Fuchs M."/>
            <person name="Duesterhoeft A."/>
            <person name="Fritzc C."/>
            <person name="Holzer E."/>
            <person name="Moestl D."/>
            <person name="Hilbert H."/>
            <person name="Borzym K."/>
            <person name="Langer I."/>
            <person name="Beck A."/>
            <person name="Lehrach H."/>
            <person name="Reinhardt R."/>
            <person name="Pohl T.M."/>
            <person name="Eger P."/>
            <person name="Zimmermann W."/>
            <person name="Wedler H."/>
            <person name="Wambutt R."/>
            <person name="Purnelle B."/>
            <person name="Goffeau A."/>
            <person name="Cadieu E."/>
            <person name="Dreano S."/>
            <person name="Gloux S."/>
            <person name="Lelaure V."/>
            <person name="Mottier S."/>
            <person name="Galibert F."/>
            <person name="Aves S.J."/>
            <person name="Xiang Z."/>
            <person name="Hunt C."/>
            <person name="Moore K."/>
            <person name="Hurst S.M."/>
            <person name="Lucas M."/>
            <person name="Rochet M."/>
            <person name="Gaillardin C."/>
            <person name="Tallada V.A."/>
            <person name="Garzon A."/>
            <person name="Thode G."/>
            <person name="Daga R.R."/>
            <person name="Cruzado L."/>
            <person name="Jimenez J."/>
            <person name="Sanchez M."/>
            <person name="del Rey F."/>
            <person name="Benito J."/>
            <person name="Dominguez A."/>
            <person name="Revuelta J.L."/>
            <person name="Moreno S."/>
            <person name="Armstrong J."/>
            <person name="Forsburg S.L."/>
            <person name="Cerutti L."/>
            <person name="Lowe T."/>
            <person name="McCombie W.R."/>
            <person name="Paulsen I."/>
            <person name="Potashkin J."/>
            <person name="Shpakovski G.V."/>
            <person name="Ussery D."/>
            <person name="Barrell B.G."/>
            <person name="Nurse P."/>
        </authorList>
    </citation>
    <scope>NUCLEOTIDE SEQUENCE [LARGE SCALE GENOMIC DNA]</scope>
    <source>
        <strain>972 / ATCC 24843</strain>
    </source>
</reference>
<reference key="2">
    <citation type="journal article" date="2011" name="Science">
        <title>Comparative functional genomics of the fission yeasts.</title>
        <authorList>
            <person name="Rhind N."/>
            <person name="Chen Z."/>
            <person name="Yassour M."/>
            <person name="Thompson D.A."/>
            <person name="Haas B.J."/>
            <person name="Habib N."/>
            <person name="Wapinski I."/>
            <person name="Roy S."/>
            <person name="Lin M.F."/>
            <person name="Heiman D.I."/>
            <person name="Young S.K."/>
            <person name="Furuya K."/>
            <person name="Guo Y."/>
            <person name="Pidoux A."/>
            <person name="Chen H.M."/>
            <person name="Robbertse B."/>
            <person name="Goldberg J.M."/>
            <person name="Aoki K."/>
            <person name="Bayne E.H."/>
            <person name="Berlin A.M."/>
            <person name="Desjardins C.A."/>
            <person name="Dobbs E."/>
            <person name="Dukaj L."/>
            <person name="Fan L."/>
            <person name="FitzGerald M.G."/>
            <person name="French C."/>
            <person name="Gujja S."/>
            <person name="Hansen K."/>
            <person name="Keifenheim D."/>
            <person name="Levin J.Z."/>
            <person name="Mosher R.A."/>
            <person name="Mueller C.A."/>
            <person name="Pfiffner J."/>
            <person name="Priest M."/>
            <person name="Russ C."/>
            <person name="Smialowska A."/>
            <person name="Swoboda P."/>
            <person name="Sykes S.M."/>
            <person name="Vaughn M."/>
            <person name="Vengrova S."/>
            <person name="Yoder R."/>
            <person name="Zeng Q."/>
            <person name="Allshire R."/>
            <person name="Baulcombe D."/>
            <person name="Birren B.W."/>
            <person name="Brown W."/>
            <person name="Ekwall K."/>
            <person name="Kellis M."/>
            <person name="Leatherwood J."/>
            <person name="Levin H."/>
            <person name="Margalit H."/>
            <person name="Martienssen R."/>
            <person name="Nieduszynski C.A."/>
            <person name="Spatafora J.W."/>
            <person name="Friedman N."/>
            <person name="Dalgaard J.Z."/>
            <person name="Baumann P."/>
            <person name="Niki H."/>
            <person name="Regev A."/>
            <person name="Nusbaum C."/>
        </authorList>
    </citation>
    <scope>REVISION OF GENE MODEL</scope>
</reference>
<reference key="3">
    <citation type="journal article" date="2006" name="Nat. Biotechnol.">
        <title>ORFeome cloning and global analysis of protein localization in the fission yeast Schizosaccharomyces pombe.</title>
        <authorList>
            <person name="Matsuyama A."/>
            <person name="Arai R."/>
            <person name="Yashiroda Y."/>
            <person name="Shirai A."/>
            <person name="Kamata A."/>
            <person name="Sekido S."/>
            <person name="Kobayashi Y."/>
            <person name="Hashimoto A."/>
            <person name="Hamamoto M."/>
            <person name="Hiraoka Y."/>
            <person name="Horinouchi S."/>
            <person name="Yoshida M."/>
        </authorList>
    </citation>
    <scope>SUBCELLULAR LOCATION [LARGE SCALE ANALYSIS]</scope>
</reference>
<feature type="transit peptide" description="Mitochondrion" evidence="2">
    <location>
        <begin position="1"/>
        <end position="54"/>
    </location>
</feature>
<feature type="chain" id="PRO_0000337686" description="Large ribosomal subunit protein bL36m">
    <location>
        <begin position="55"/>
        <end position="92"/>
    </location>
</feature>
<proteinExistence type="inferred from homology"/>
<protein>
    <recommendedName>
        <fullName evidence="4">Large ribosomal subunit protein bL36m</fullName>
    </recommendedName>
    <alternativeName>
        <fullName>54S ribosomal protein rtc6, mitochondrial</fullName>
    </alternativeName>
</protein>
<sequence>MASLGRKFFAVGVLSRVFPSAFNAQKGLLKNASMFLTPAFRLSPSLLPWNFSRGFKVKASVKKRCSSCYFVRRKGRLYVLCKKHPRHKTRQG</sequence>
<evidence type="ECO:0000250" key="1">
    <source>
        <dbReference type="UniProtKB" id="O14464"/>
    </source>
</evidence>
<evidence type="ECO:0000255" key="2"/>
<evidence type="ECO:0000269" key="3">
    <source>
    </source>
</evidence>
<evidence type="ECO:0000305" key="4"/>
<comment type="function">
    <text evidence="1">Component of the mitochondrial ribosome (mitoribosome), a dedicated translation machinery responsible for the synthesis of mitochondrial genome-encoded proteins, including at least some of the essential transmembrane subunits of the mitochondrial respiratory chain. The mitoribosomes are attached to the mitochondrial inner membrane and translation products are cotranslationally integrated into the membrane. bL36m may be involved in a process influencing telomere capping.</text>
</comment>
<comment type="subunit">
    <text evidence="1">Component of the mitochondrial large ribosomal subunit (mt-LSU). Mature yeast 74S mitochondrial ribosomes consist of a small (37S) and a large (54S) subunit. The 37S small subunit contains a 15S ribosomal RNA (15S mt-rRNA) and at least 32 different proteins. The 54S large subunit contains a 21S rRNA (21S mt-rRNA) and at least 45 different proteins. bL36m has a zinc binding site.</text>
</comment>
<comment type="subcellular location">
    <subcellularLocation>
        <location evidence="3">Mitochondrion</location>
    </subcellularLocation>
</comment>
<comment type="similarity">
    <text evidence="4">Belongs to the bacterial ribosomal protein bL36 family.</text>
</comment>
<gene>
    <name type="primary">rtc6</name>
    <name type="ORF">SPBC83.06c</name>
</gene>